<reference key="1">
    <citation type="submission" date="1997-09" db="EMBL/GenBank/DDBJ databases">
        <authorList>
            <person name="Yoshida T."/>
            <person name="Yohda M."/>
            <person name="Ohta T."/>
            <person name="Iida T."/>
            <person name="Maruyama T."/>
            <person name="Kagawa Y."/>
        </authorList>
    </citation>
    <scope>NUCLEOTIDE SEQUENCE [GENOMIC DNA]</scope>
</reference>
<sequence>MAQLSGQPVVILPEGTQRYVGRDAQRLNILAARIIAETVRTTLGPKGMDKMLVDSLGDIVVTNDGATILDKIDLQHPAAKMMVEVAKTQDKEAGDGTTTAVVIAGELLRKAEELLDQNIHPSIIIKGYALAAEKAQEILEEIAIKVNPDDEETLLRIAMTSITGKNAESHKELLAKLAVDAVKQVAEKKDGKYVVDLDNIKFEKKAGEGVEESELVRGVVIDKEVVHPRMPKRVEGAKIALINEALEVKKTETDAKINITSPDQLMSFLEQEEKMLKDMVDHIAQTGANVVFVQKGIDDLAQHYLAKYGIMAVRRVKKSDMEKLAKATGAKIVTNVKDLTPEDLGYAEIVEERKLAGENMIFVEGCKNPKAVTILIRGGTEHVIDEVERALEDAVKVVKDVMEDGAVLPAGGAPEIELAISVDEYAKQVGGKEALAIENFADALKIIPKTLAENAGLDTVEILVKVISEHKNKGLGIGIDVFAGEPADMLERGIIAPLRVTKQAIKSARAAIMILRIDDVIAAKVSKPEGRQGAECPPNGCMGGMDMRM</sequence>
<feature type="chain" id="PRO_0000128413" description="Thermosome subunit alpha">
    <location>
        <begin position="1"/>
        <end position="549"/>
    </location>
</feature>
<feature type="region of interest" description="Disordered" evidence="2">
    <location>
        <begin position="529"/>
        <end position="549"/>
    </location>
</feature>
<gene>
    <name type="primary">thsA</name>
</gene>
<keyword id="KW-0067">ATP-binding</keyword>
<keyword id="KW-0143">Chaperone</keyword>
<keyword id="KW-0547">Nucleotide-binding</keyword>
<evidence type="ECO:0000250" key="1"/>
<evidence type="ECO:0000256" key="2">
    <source>
        <dbReference type="SAM" id="MobiDB-lite"/>
    </source>
</evidence>
<evidence type="ECO:0000305" key="3"/>
<name>THSA_THEK8</name>
<organism>
    <name type="scientific">Thermococcus sp. (strain KS-8)</name>
    <dbReference type="NCBI Taxonomy" id="79680"/>
    <lineage>
        <taxon>Archaea</taxon>
        <taxon>Methanobacteriati</taxon>
        <taxon>Methanobacteriota</taxon>
        <taxon>Thermococci</taxon>
        <taxon>Thermococcales</taxon>
        <taxon>Thermococcaceae</taxon>
        <taxon>Thermococcus</taxon>
    </lineage>
</organism>
<comment type="function">
    <text evidence="1">Molecular chaperone; binds unfolded polypeptides in vitro, and has a weak ATPase activity.</text>
</comment>
<comment type="subunit">
    <text evidence="1">Forms a Heterooligomeric complex of two stacked eight-membered rings.</text>
</comment>
<comment type="similarity">
    <text evidence="3">Belongs to the TCP-1 chaperonin family.</text>
</comment>
<dbReference type="EMBL" id="AB001082">
    <property type="protein sequence ID" value="BAA22209.1"/>
    <property type="molecule type" value="Genomic_DNA"/>
</dbReference>
<dbReference type="SMR" id="O24731"/>
<dbReference type="GO" id="GO:0005524">
    <property type="term" value="F:ATP binding"/>
    <property type="evidence" value="ECO:0007669"/>
    <property type="project" value="UniProtKB-KW"/>
</dbReference>
<dbReference type="GO" id="GO:0016887">
    <property type="term" value="F:ATP hydrolysis activity"/>
    <property type="evidence" value="ECO:0007669"/>
    <property type="project" value="InterPro"/>
</dbReference>
<dbReference type="GO" id="GO:0140662">
    <property type="term" value="F:ATP-dependent protein folding chaperone"/>
    <property type="evidence" value="ECO:0007669"/>
    <property type="project" value="InterPro"/>
</dbReference>
<dbReference type="GO" id="GO:0051082">
    <property type="term" value="F:unfolded protein binding"/>
    <property type="evidence" value="ECO:0007669"/>
    <property type="project" value="InterPro"/>
</dbReference>
<dbReference type="CDD" id="cd03343">
    <property type="entry name" value="cpn60"/>
    <property type="match status" value="1"/>
</dbReference>
<dbReference type="Gene3D" id="3.50.7.10">
    <property type="entry name" value="GroEL"/>
    <property type="match status" value="1"/>
</dbReference>
<dbReference type="Gene3D" id="1.10.560.10">
    <property type="entry name" value="GroEL-like equatorial domain"/>
    <property type="match status" value="1"/>
</dbReference>
<dbReference type="Gene3D" id="3.30.260.10">
    <property type="entry name" value="TCP-1-like chaperonin intermediate domain"/>
    <property type="match status" value="1"/>
</dbReference>
<dbReference type="InterPro" id="IPR017998">
    <property type="entry name" value="Chaperone_TCP-1"/>
</dbReference>
<dbReference type="InterPro" id="IPR002194">
    <property type="entry name" value="Chaperonin_TCP-1_CS"/>
</dbReference>
<dbReference type="InterPro" id="IPR002423">
    <property type="entry name" value="Cpn60/GroEL/TCP-1"/>
</dbReference>
<dbReference type="InterPro" id="IPR027409">
    <property type="entry name" value="GroEL-like_apical_dom_sf"/>
</dbReference>
<dbReference type="InterPro" id="IPR027413">
    <property type="entry name" value="GROEL-like_equatorial_sf"/>
</dbReference>
<dbReference type="InterPro" id="IPR027410">
    <property type="entry name" value="TCP-1-like_intermed_sf"/>
</dbReference>
<dbReference type="InterPro" id="IPR053374">
    <property type="entry name" value="TCP-1_chaperonin"/>
</dbReference>
<dbReference type="InterPro" id="IPR054827">
    <property type="entry name" value="thermosome_alpha"/>
</dbReference>
<dbReference type="InterPro" id="IPR012714">
    <property type="entry name" value="Thermosome_arc"/>
</dbReference>
<dbReference type="NCBIfam" id="NF041082">
    <property type="entry name" value="thermosome_alpha"/>
    <property type="match status" value="1"/>
</dbReference>
<dbReference type="NCBIfam" id="TIGR02339">
    <property type="entry name" value="thermosome_arch"/>
    <property type="match status" value="1"/>
</dbReference>
<dbReference type="NCBIfam" id="NF041083">
    <property type="entry name" value="thermosome_beta"/>
    <property type="match status" value="1"/>
</dbReference>
<dbReference type="PANTHER" id="PTHR11353">
    <property type="entry name" value="CHAPERONIN"/>
    <property type="match status" value="1"/>
</dbReference>
<dbReference type="Pfam" id="PF00118">
    <property type="entry name" value="Cpn60_TCP1"/>
    <property type="match status" value="1"/>
</dbReference>
<dbReference type="PRINTS" id="PR00304">
    <property type="entry name" value="TCOMPLEXTCP1"/>
</dbReference>
<dbReference type="SUPFAM" id="SSF52029">
    <property type="entry name" value="GroEL apical domain-like"/>
    <property type="match status" value="1"/>
</dbReference>
<dbReference type="SUPFAM" id="SSF48592">
    <property type="entry name" value="GroEL equatorial domain-like"/>
    <property type="match status" value="1"/>
</dbReference>
<dbReference type="SUPFAM" id="SSF54849">
    <property type="entry name" value="GroEL-intermediate domain like"/>
    <property type="match status" value="1"/>
</dbReference>
<dbReference type="PROSITE" id="PS00750">
    <property type="entry name" value="TCP1_1"/>
    <property type="match status" value="1"/>
</dbReference>
<dbReference type="PROSITE" id="PS00751">
    <property type="entry name" value="TCP1_2"/>
    <property type="match status" value="1"/>
</dbReference>
<dbReference type="PROSITE" id="PS00995">
    <property type="entry name" value="TCP1_3"/>
    <property type="match status" value="1"/>
</dbReference>
<protein>
    <recommendedName>
        <fullName>Thermosome subunit alpha</fullName>
    </recommendedName>
    <alternativeName>
        <fullName>Chaperonin subunit alpha</fullName>
    </alternativeName>
    <alternativeName>
        <fullName>Thermosome subunit 1</fullName>
    </alternativeName>
</protein>
<accession>O24731</accession>
<proteinExistence type="inferred from homology"/>